<reference key="1">
    <citation type="journal article" date="1999" name="Int. Immunol.">
        <title>IKK-i, a novel lipopolysaccharide-inducible kinase that is related to IkappaB kinases.</title>
        <authorList>
            <person name="Shimada T."/>
            <person name="Kawai T."/>
            <person name="Takeda K."/>
            <person name="Matsumoto M."/>
            <person name="Inoue J."/>
            <person name="Tatsumi Y."/>
            <person name="Kanamaru A."/>
            <person name="Akira S."/>
        </authorList>
    </citation>
    <scope>NUCLEOTIDE SEQUENCE [MRNA]</scope>
    <scope>FUNCTION</scope>
    <scope>CATALYTIC ACTIVITY</scope>
    <source>
        <tissue>Macrophage</tissue>
    </source>
</reference>
<reference key="2">
    <citation type="journal article" date="2005" name="Science">
        <title>The transcriptional landscape of the mammalian genome.</title>
        <authorList>
            <person name="Carninci P."/>
            <person name="Kasukawa T."/>
            <person name="Katayama S."/>
            <person name="Gough J."/>
            <person name="Frith M.C."/>
            <person name="Maeda N."/>
            <person name="Oyama R."/>
            <person name="Ravasi T."/>
            <person name="Lenhard B."/>
            <person name="Wells C."/>
            <person name="Kodzius R."/>
            <person name="Shimokawa K."/>
            <person name="Bajic V.B."/>
            <person name="Brenner S.E."/>
            <person name="Batalov S."/>
            <person name="Forrest A.R."/>
            <person name="Zavolan M."/>
            <person name="Davis M.J."/>
            <person name="Wilming L.G."/>
            <person name="Aidinis V."/>
            <person name="Allen J.E."/>
            <person name="Ambesi-Impiombato A."/>
            <person name="Apweiler R."/>
            <person name="Aturaliya R.N."/>
            <person name="Bailey T.L."/>
            <person name="Bansal M."/>
            <person name="Baxter L."/>
            <person name="Beisel K.W."/>
            <person name="Bersano T."/>
            <person name="Bono H."/>
            <person name="Chalk A.M."/>
            <person name="Chiu K.P."/>
            <person name="Choudhary V."/>
            <person name="Christoffels A."/>
            <person name="Clutterbuck D.R."/>
            <person name="Crowe M.L."/>
            <person name="Dalla E."/>
            <person name="Dalrymple B.P."/>
            <person name="de Bono B."/>
            <person name="Della Gatta G."/>
            <person name="di Bernardo D."/>
            <person name="Down T."/>
            <person name="Engstrom P."/>
            <person name="Fagiolini M."/>
            <person name="Faulkner G."/>
            <person name="Fletcher C.F."/>
            <person name="Fukushima T."/>
            <person name="Furuno M."/>
            <person name="Futaki S."/>
            <person name="Gariboldi M."/>
            <person name="Georgii-Hemming P."/>
            <person name="Gingeras T.R."/>
            <person name="Gojobori T."/>
            <person name="Green R.E."/>
            <person name="Gustincich S."/>
            <person name="Harbers M."/>
            <person name="Hayashi Y."/>
            <person name="Hensch T.K."/>
            <person name="Hirokawa N."/>
            <person name="Hill D."/>
            <person name="Huminiecki L."/>
            <person name="Iacono M."/>
            <person name="Ikeo K."/>
            <person name="Iwama A."/>
            <person name="Ishikawa T."/>
            <person name="Jakt M."/>
            <person name="Kanapin A."/>
            <person name="Katoh M."/>
            <person name="Kawasawa Y."/>
            <person name="Kelso J."/>
            <person name="Kitamura H."/>
            <person name="Kitano H."/>
            <person name="Kollias G."/>
            <person name="Krishnan S.P."/>
            <person name="Kruger A."/>
            <person name="Kummerfeld S.K."/>
            <person name="Kurochkin I.V."/>
            <person name="Lareau L.F."/>
            <person name="Lazarevic D."/>
            <person name="Lipovich L."/>
            <person name="Liu J."/>
            <person name="Liuni S."/>
            <person name="McWilliam S."/>
            <person name="Madan Babu M."/>
            <person name="Madera M."/>
            <person name="Marchionni L."/>
            <person name="Matsuda H."/>
            <person name="Matsuzawa S."/>
            <person name="Miki H."/>
            <person name="Mignone F."/>
            <person name="Miyake S."/>
            <person name="Morris K."/>
            <person name="Mottagui-Tabar S."/>
            <person name="Mulder N."/>
            <person name="Nakano N."/>
            <person name="Nakauchi H."/>
            <person name="Ng P."/>
            <person name="Nilsson R."/>
            <person name="Nishiguchi S."/>
            <person name="Nishikawa S."/>
            <person name="Nori F."/>
            <person name="Ohara O."/>
            <person name="Okazaki Y."/>
            <person name="Orlando V."/>
            <person name="Pang K.C."/>
            <person name="Pavan W.J."/>
            <person name="Pavesi G."/>
            <person name="Pesole G."/>
            <person name="Petrovsky N."/>
            <person name="Piazza S."/>
            <person name="Reed J."/>
            <person name="Reid J.F."/>
            <person name="Ring B.Z."/>
            <person name="Ringwald M."/>
            <person name="Rost B."/>
            <person name="Ruan Y."/>
            <person name="Salzberg S.L."/>
            <person name="Sandelin A."/>
            <person name="Schneider C."/>
            <person name="Schoenbach C."/>
            <person name="Sekiguchi K."/>
            <person name="Semple C.A."/>
            <person name="Seno S."/>
            <person name="Sessa L."/>
            <person name="Sheng Y."/>
            <person name="Shibata Y."/>
            <person name="Shimada H."/>
            <person name="Shimada K."/>
            <person name="Silva D."/>
            <person name="Sinclair B."/>
            <person name="Sperling S."/>
            <person name="Stupka E."/>
            <person name="Sugiura K."/>
            <person name="Sultana R."/>
            <person name="Takenaka Y."/>
            <person name="Taki K."/>
            <person name="Tammoja K."/>
            <person name="Tan S.L."/>
            <person name="Tang S."/>
            <person name="Taylor M.S."/>
            <person name="Tegner J."/>
            <person name="Teichmann S.A."/>
            <person name="Ueda H.R."/>
            <person name="van Nimwegen E."/>
            <person name="Verardo R."/>
            <person name="Wei C.L."/>
            <person name="Yagi K."/>
            <person name="Yamanishi H."/>
            <person name="Zabarovsky E."/>
            <person name="Zhu S."/>
            <person name="Zimmer A."/>
            <person name="Hide W."/>
            <person name="Bult C."/>
            <person name="Grimmond S.M."/>
            <person name="Teasdale R.D."/>
            <person name="Liu E.T."/>
            <person name="Brusic V."/>
            <person name="Quackenbush J."/>
            <person name="Wahlestedt C."/>
            <person name="Mattick J.S."/>
            <person name="Hume D.A."/>
            <person name="Kai C."/>
            <person name="Sasaki D."/>
            <person name="Tomaru Y."/>
            <person name="Fukuda S."/>
            <person name="Kanamori-Katayama M."/>
            <person name="Suzuki M."/>
            <person name="Aoki J."/>
            <person name="Arakawa T."/>
            <person name="Iida J."/>
            <person name="Imamura K."/>
            <person name="Itoh M."/>
            <person name="Kato T."/>
            <person name="Kawaji H."/>
            <person name="Kawagashira N."/>
            <person name="Kawashima T."/>
            <person name="Kojima M."/>
            <person name="Kondo S."/>
            <person name="Konno H."/>
            <person name="Nakano K."/>
            <person name="Ninomiya N."/>
            <person name="Nishio T."/>
            <person name="Okada M."/>
            <person name="Plessy C."/>
            <person name="Shibata K."/>
            <person name="Shiraki T."/>
            <person name="Suzuki S."/>
            <person name="Tagami M."/>
            <person name="Waki K."/>
            <person name="Watahiki A."/>
            <person name="Okamura-Oho Y."/>
            <person name="Suzuki H."/>
            <person name="Kawai J."/>
            <person name="Hayashizaki Y."/>
        </authorList>
    </citation>
    <scope>NUCLEOTIDE SEQUENCE [LARGE SCALE MRNA]</scope>
    <source>
        <strain>C57BL/6J</strain>
        <strain>NOD</strain>
        <tissue>Bone marrow</tissue>
        <tissue>Thymus</tissue>
    </source>
</reference>
<reference key="3">
    <citation type="journal article" date="2009" name="PLoS Biol.">
        <title>Lineage-specific biology revealed by a finished genome assembly of the mouse.</title>
        <authorList>
            <person name="Church D.M."/>
            <person name="Goodstadt L."/>
            <person name="Hillier L.W."/>
            <person name="Zody M.C."/>
            <person name="Goldstein S."/>
            <person name="She X."/>
            <person name="Bult C.J."/>
            <person name="Agarwala R."/>
            <person name="Cherry J.L."/>
            <person name="DiCuccio M."/>
            <person name="Hlavina W."/>
            <person name="Kapustin Y."/>
            <person name="Meric P."/>
            <person name="Maglott D."/>
            <person name="Birtle Z."/>
            <person name="Marques A.C."/>
            <person name="Graves T."/>
            <person name="Zhou S."/>
            <person name="Teague B."/>
            <person name="Potamousis K."/>
            <person name="Churas C."/>
            <person name="Place M."/>
            <person name="Herschleb J."/>
            <person name="Runnheim R."/>
            <person name="Forrest D."/>
            <person name="Amos-Landgraf J."/>
            <person name="Schwartz D.C."/>
            <person name="Cheng Z."/>
            <person name="Lindblad-Toh K."/>
            <person name="Eichler E.E."/>
            <person name="Ponting C.P."/>
        </authorList>
    </citation>
    <scope>NUCLEOTIDE SEQUENCE [LARGE SCALE GENOMIC DNA]</scope>
    <source>
        <strain>C57BL/6J</strain>
    </source>
</reference>
<reference key="4">
    <citation type="submission" date="2005-07" db="EMBL/GenBank/DDBJ databases">
        <authorList>
            <person name="Mural R.J."/>
            <person name="Adams M.D."/>
            <person name="Myers E.W."/>
            <person name="Smith H.O."/>
            <person name="Venter J.C."/>
        </authorList>
    </citation>
    <scope>NUCLEOTIDE SEQUENCE [LARGE SCALE GENOMIC DNA]</scope>
</reference>
<reference key="5">
    <citation type="journal article" date="2004" name="J. Exp. Med.">
        <title>The roles of two IkappaB kinase-related kinases in lipopolysaccharide and double stranded RNA signaling and viral infection.</title>
        <authorList>
            <person name="Hemmi H."/>
            <person name="Takeuchi O."/>
            <person name="Sato S."/>
            <person name="Yamamoto M."/>
            <person name="Kaisho T."/>
            <person name="Sanjo H."/>
            <person name="Kawai T."/>
            <person name="Hoshino K."/>
            <person name="Takeda K."/>
            <person name="Akira S."/>
        </authorList>
    </citation>
    <scope>FUNCTION</scope>
    <scope>DISRUPTION PHENOTYPE</scope>
</reference>
<reference key="6">
    <citation type="journal article" date="2007" name="EMBO J.">
        <title>SINTBAD, a novel component of innate antiviral immunity, shares a TBK1-binding domain with NAP1 and TANK.</title>
        <authorList>
            <person name="Ryzhakov G."/>
            <person name="Randow F."/>
        </authorList>
    </citation>
    <scope>INTERACTION WITH AZI2; TANK AND TBKBP1</scope>
</reference>
<reference key="7">
    <citation type="journal article" date="2007" name="Science">
        <title>Multiple functions of the IKK-related kinase IKKepsilon in interferon-mediated antiviral immunity.</title>
        <authorList>
            <person name="Tenoever B.R."/>
            <person name="Ng S.L."/>
            <person name="Chua M.A."/>
            <person name="McWhirter S.M."/>
            <person name="Garcia-Sastre A."/>
            <person name="Maniatis T."/>
        </authorList>
    </citation>
    <scope>FUNCTION IN STAT1 ACTIVATION</scope>
    <scope>PHOSPHORYLATION AT THR-503</scope>
    <scope>DISRUPTION PHENOTYPE</scope>
    <scope>TISSUE SPECIFICITY</scope>
    <scope>MUTAGENESIS OF LYS-38</scope>
</reference>
<reference key="8">
    <citation type="journal article" date="2009" name="Cell">
        <title>The protein kinase IKKepsilon regulates energy balance in obese mice.</title>
        <authorList>
            <person name="Chiang S.H."/>
            <person name="Bazuine M."/>
            <person name="Lumeng C.N."/>
            <person name="Geletka L.M."/>
            <person name="Mowers J."/>
            <person name="White N.M."/>
            <person name="Ma J.T."/>
            <person name="Zhou J."/>
            <person name="Qi N."/>
            <person name="Westcott D."/>
            <person name="Delproposto J.B."/>
            <person name="Blackwell T.S."/>
            <person name="Yull F.E."/>
            <person name="Saltiel A.R."/>
        </authorList>
    </citation>
    <scope>FUNCTION IN ENERGY BALANCE</scope>
    <scope>DISRUPTION PHENOTYPE</scope>
    <scope>INDUCTION BY HIGH-FAT DIET</scope>
    <scope>TISSUE SPECIFICITY</scope>
</reference>
<reference key="9">
    <citation type="journal article" date="2011" name="J. Biol. Chem.">
        <title>Inhibitor of kappaB kinase epsilon (IKK(epsilon)), STAT1, and IFIT2 proteins define novel innate immune effector pathway against West Nile virus infection.</title>
        <authorList>
            <person name="Perwitasari O."/>
            <person name="Cho H."/>
            <person name="Diamond M.S."/>
            <person name="Gale M. Jr."/>
        </authorList>
    </citation>
    <scope>FUNCTION IN STAT1 ACTIVATION</scope>
    <scope>DISRUPTION PHENOTYPE</scope>
</reference>
<reference key="10">
    <citation type="journal article" date="2011" name="Proc. Natl. Acad. Sci. U.S.A.">
        <title>IkappaB kinase epsilon (IKK(epsilon)) regulates the balance between type I and type II interferon responses.</title>
        <authorList>
            <person name="Ng S.L."/>
            <person name="Friedman B.A."/>
            <person name="Schmid S."/>
            <person name="Gertz J."/>
            <person name="Myers R.M."/>
            <person name="Tenoever B.R."/>
            <person name="Maniatis T."/>
        </authorList>
    </citation>
    <scope>FUNCTION REGULATION IN IFN RESPONSE</scope>
</reference>
<reference key="11">
    <citation type="journal article" date="2013" name="Nat. Med.">
        <title>An inhibitor of the protein kinases TBK1 and IKK-[?] improves obesity-related metabolic dysfunctions in mice.</title>
        <authorList>
            <person name="Reilly S.M."/>
            <person name="Chiang S.H."/>
            <person name="Decker S.J."/>
            <person name="Chang L."/>
            <person name="Uhm M."/>
            <person name="Larsen M.J."/>
            <person name="Rubin J.R."/>
            <person name="Mowers J."/>
            <person name="White N.M."/>
            <person name="Hochberg I."/>
            <person name="Downes M."/>
            <person name="Yu R.T."/>
            <person name="Liddle C."/>
            <person name="Evans R.M."/>
            <person name="Oh D."/>
            <person name="Li P."/>
            <person name="Olefsky J.M."/>
            <person name="Saltiel A.R."/>
        </authorList>
    </citation>
    <scope>FUNCTION IN ENERGY BALANCE</scope>
    <scope>DISRUPTION PHENOTYPE</scope>
    <scope>INDUCTION BY HIGH-FAT DIET</scope>
    <scope>TISSUE SPECIFICITY</scope>
    <scope>ACTIVITY REGULATION</scope>
</reference>
<comment type="function">
    <text evidence="4 5 6 8 9 10 11">Serine/threonine kinase that plays an essential role in regulating inflammatory responses to viral infection, through the activation of the type I IFN, NF-kappa-B and STAT signaling. Also involved in TNFA and inflammatory cytokines, like Interleukin-1, signaling. Following activation of viral RNA sensors, such as RIG-I-like receptors, associates with DDX3X and phosphorylates interferon regulatory factors (IRFs), IRF3 and IRF7, as well as DDX3X. This activity allows subsequent homodimerization and nuclear translocation of the IRF3 leading to transcriptional activation of pro-inflammatory and antiviral genes including IFNB. In order to establish such an antiviral state, IKBKE forms several different complexes whose composition depends on the type of cell and cellular stimuli. Thus, several scaffolding molecules including IPS1/MAVS, TANK, AZI2/NAP1 or TBKBP1/SINTBAD can be recruited to the IKBKE-containing-complexes. Activated by polyubiquitination in response to TNFA and interleukin-1, regulates the NF-kappa-B signaling pathway through, at least, the phosphorylation of CYLD. Phosphorylates inhibitors of NF-kappa-B thus leading to the dissociation of the inhibitor/NF-kappa-B complex and ultimately the degradation of the inhibitor. In addition, is also required for the induction of a subset of ISGs which displays antiviral activity, may be through the phosphorylation of STAT1 at 'Ser-708'. Phosphorylation of STAT1 at 'Ser-708' also seems to promote the assembly and DNA binding of ISGF3 (STAT1:STAT2:IRF9) complexes compared to GAF (STAT1:STAT1) complexes, in this way regulating the balance between type I and type II IFN responses. Protects cells against DNA damage-induced cell death. Also plays an important role in energy balance regulation by sustaining a state of chronic, low-grade inflammation in obesity, wich leads to a negative impact on insulin sensitivity. Phosphorylates AKT1.</text>
</comment>
<comment type="catalytic activity">
    <reaction evidence="4">
        <text>L-seryl-[I-kappa-B protein] + ATP = O-phospho-L-seryl-[I-kappa-B protein] + ADP + H(+)</text>
        <dbReference type="Rhea" id="RHEA:19073"/>
        <dbReference type="Rhea" id="RHEA-COMP:13698"/>
        <dbReference type="Rhea" id="RHEA-COMP:13699"/>
        <dbReference type="ChEBI" id="CHEBI:15378"/>
        <dbReference type="ChEBI" id="CHEBI:29999"/>
        <dbReference type="ChEBI" id="CHEBI:30616"/>
        <dbReference type="ChEBI" id="CHEBI:83421"/>
        <dbReference type="ChEBI" id="CHEBI:456216"/>
        <dbReference type="EC" id="2.7.11.10"/>
    </reaction>
    <physiologicalReaction direction="left-to-right" evidence="13">
        <dbReference type="Rhea" id="RHEA:19074"/>
    </physiologicalReaction>
</comment>
<comment type="activity regulation">
    <text evidence="11">Kinase activity is inhibited competitively by amlexanox.</text>
</comment>
<comment type="subunit">
    <text evidence="2 7">Homodimer (By similarity). Interacts with MAVS/IPS1 (By similarity). Interacts (via protein kinase domain) with TTLL12 (via N-terminus); the interaction prevents MAVS binding to IKBKE (By similarity). Interacts with the adapter proteins AZI2/NAP1, TANK and TBKBP1/SINTBAD (PubMed:17568778). Interacts with SIKE1 (By similarity). Interacts with TICAM1/TRIF, IRF3 and RIGI; interactions are disrupted by the interaction between IKBKE and SIKE1 (By similarity). Interacts with TOPORS; induced by DNA damage (By similarity). Interacts with CYLD, IKBKB, IKBKG and MYD88 (By similarity). Interacts with IFIH1 (By similarity). Interacts with DDX3X; the interaction may be induced upon virus infection (By similarity). Interacts with TRIM6 (via SPRY box) (By similarity). Interacts with unanchored K48-linked polyubiquitin chains; this leads to IKBKE activation (By similarity). Interacts with TBK1 (By similarity). Interacts with FKBP5 (By similarity).</text>
</comment>
<comment type="interaction">
    <interactant intactId="EBI-6664658">
        <id>Q9R0T8</id>
    </interactant>
    <interactant intactId="EBI-646165">
        <id>Q8N7N6</id>
        <label>Traf3ip2</label>
    </interactant>
    <organismsDiffer>false</organismsDiffer>
    <experiments>3</experiments>
</comment>
<comment type="subcellular location">
    <subcellularLocation>
        <location evidence="2">Cytoplasm</location>
    </subcellularLocation>
    <subcellularLocation>
        <location evidence="2">Nucleus</location>
    </subcellularLocation>
    <subcellularLocation>
        <location evidence="2">Nucleus</location>
        <location evidence="2">PML body</location>
    </subcellularLocation>
    <text evidence="2">Targeting to PML nuclear bodies upon DNA damage is TOPORS-dependent. Located diffusely throughout the cytoplasm but locates to punctate cytoplasmic bodies when coexpressed with TRIM6.</text>
</comment>
<comment type="tissue specificity">
    <text evidence="6 8 11">Expressed in bone marrow-derived macrophages and at low levels in liver and white adipose tissue (at protein level). Detected in muscle and lung.</text>
</comment>
<comment type="induction">
    <text evidence="8 11">Induced by lipopolysaccharide (LPS) and TNFA. Under high-fat diet, highly induced (via NF-kappa-B) in adipocytes and M1-polarized adipose tissue macrophages.</text>
</comment>
<comment type="PTM">
    <text evidence="1">Sumoylation by TOPORS upon DNA damage is required for protection of cells against DNA damage-induced cell death. Desumoylated by SENP1 (By similarity).</text>
</comment>
<comment type="PTM">
    <text evidence="6">Autophosphorylated and phosphorylated by IKBKB/IKKB. Phosphorylation at Ser-172 is enhanced by the interaction with DDX3X. Phosphorylated at Thr-503 upon IFN activation.</text>
</comment>
<comment type="PTM">
    <text evidence="1">'Lys-63'-linked polyubiquitinated at Lys-30 and Lys-403 by TRAF2:BIRC2 and TRAF2:BIRC3 complexes. Ubiquitination is induced by LPS, TNFA and interleukin-1 and required for full kinase activity and KF-kappa-B pathway activation (By similarity).</text>
</comment>
<comment type="disruption phenotype">
    <text evidence="5 6 8 9 11">Animals are hypersusceptible to influenza virus infection because of a defect in the activation of a subset of type 1 IFN-stimulated genes, however the amounts of IFNB produced are normals. Lungs of mice infected 7 days with influenza virus exhibit an inflammatory infiltrate consisting of lymphocytes, macrophages and neutrophils. After West Nile virus infection, animals display earlier neurological symptoms, a higher degree of neurovirulence and a failure to recover, compared to wild type. Animals are protected from high-fat diet-induced obesity, liver and adipose inflammation, hepatic steatosis and insulin resistance. They show an increased energy expenditure and thermogenesis and maintain insulin sensitivity in liver and adipose tissue.</text>
</comment>
<comment type="similarity">
    <text evidence="3">Belongs to the protein kinase superfamily. Ser/Thr protein kinase family. I-kappa-B kinase subfamily.</text>
</comment>
<proteinExistence type="evidence at protein level"/>
<dbReference type="EC" id="2.7.11.10" evidence="4"/>
<dbReference type="EMBL" id="AB016589">
    <property type="protein sequence ID" value="BAA85154.1"/>
    <property type="molecule type" value="mRNA"/>
</dbReference>
<dbReference type="EMBL" id="AK088580">
    <property type="protein sequence ID" value="BAC40434.1"/>
    <property type="molecule type" value="mRNA"/>
</dbReference>
<dbReference type="EMBL" id="AK149911">
    <property type="protein sequence ID" value="BAE29161.1"/>
    <property type="molecule type" value="mRNA"/>
</dbReference>
<dbReference type="EMBL" id="CT010206">
    <property type="protein sequence ID" value="CAJ18414.1"/>
    <property type="molecule type" value="mRNA"/>
</dbReference>
<dbReference type="EMBL" id="CH466520">
    <property type="protein sequence ID" value="EDL39710.1"/>
    <property type="molecule type" value="Genomic_DNA"/>
</dbReference>
<dbReference type="CCDS" id="CCDS15269.1"/>
<dbReference type="RefSeq" id="NP_062751.2">
    <property type="nucleotide sequence ID" value="NM_019777.3"/>
</dbReference>
<dbReference type="RefSeq" id="XP_011246354.1">
    <property type="nucleotide sequence ID" value="XM_011248052.4"/>
</dbReference>
<dbReference type="SMR" id="Q9R0T8"/>
<dbReference type="BioGRID" id="208014">
    <property type="interactions" value="7"/>
</dbReference>
<dbReference type="CORUM" id="Q9R0T8"/>
<dbReference type="FunCoup" id="Q9R0T8">
    <property type="interactions" value="2600"/>
</dbReference>
<dbReference type="IntAct" id="Q9R0T8">
    <property type="interactions" value="2"/>
</dbReference>
<dbReference type="STRING" id="10090.ENSMUSP00000054126"/>
<dbReference type="ChEMBL" id="CHEMBL4296094"/>
<dbReference type="iPTMnet" id="Q9R0T8"/>
<dbReference type="PhosphoSitePlus" id="Q9R0T8"/>
<dbReference type="PaxDb" id="10090-ENSMUSP00000054126"/>
<dbReference type="ProteomicsDB" id="266963"/>
<dbReference type="Pumba" id="Q9R0T8"/>
<dbReference type="Antibodypedia" id="73513">
    <property type="antibodies" value="618 antibodies from 45 providers"/>
</dbReference>
<dbReference type="DNASU" id="56489"/>
<dbReference type="Ensembl" id="ENSMUST00000062108.10">
    <property type="protein sequence ID" value="ENSMUSP00000054126.4"/>
    <property type="gene ID" value="ENSMUSG00000042349.14"/>
</dbReference>
<dbReference type="GeneID" id="56489"/>
<dbReference type="KEGG" id="mmu:56489"/>
<dbReference type="UCSC" id="uc007cnf.1">
    <property type="organism name" value="mouse"/>
</dbReference>
<dbReference type="AGR" id="MGI:1929612"/>
<dbReference type="CTD" id="9641"/>
<dbReference type="MGI" id="MGI:1929612">
    <property type="gene designation" value="Ikbke"/>
</dbReference>
<dbReference type="VEuPathDB" id="HostDB:ENSMUSG00000042349"/>
<dbReference type="eggNOG" id="KOG4250">
    <property type="taxonomic scope" value="Eukaryota"/>
</dbReference>
<dbReference type="GeneTree" id="ENSGT00950000182937"/>
<dbReference type="HOGENOM" id="CLU_000288_101_1_1"/>
<dbReference type="InParanoid" id="Q9R0T8"/>
<dbReference type="OMA" id="AEQAKCW"/>
<dbReference type="OrthoDB" id="10013850at2759"/>
<dbReference type="PhylomeDB" id="Q9R0T8"/>
<dbReference type="TreeFam" id="TF324269"/>
<dbReference type="BRENDA" id="2.7.11.10">
    <property type="organism ID" value="3474"/>
</dbReference>
<dbReference type="Reactome" id="R-MMU-4755510">
    <property type="pathway name" value="SUMOylation of immune response proteins"/>
</dbReference>
<dbReference type="Reactome" id="R-MMU-5357786">
    <property type="pathway name" value="TNFR1-induced proapoptotic signaling"/>
</dbReference>
<dbReference type="Reactome" id="R-MMU-5357905">
    <property type="pathway name" value="Regulation of TNFR1 signaling"/>
</dbReference>
<dbReference type="Reactome" id="R-MMU-936440">
    <property type="pathway name" value="Negative regulators of DDX58/IFIH1 signaling"/>
</dbReference>
<dbReference type="Reactome" id="R-MMU-936964">
    <property type="pathway name" value="Activation of IRF3, IRF7 mediated by TBK1, IKKEpsilon (IKBKE)"/>
</dbReference>
<dbReference type="Reactome" id="R-MMU-9824878">
    <property type="pathway name" value="Regulation of TBK1, IKKEpsilon (IKBKE)-mediated activation of IRF3, IRF7"/>
</dbReference>
<dbReference type="Reactome" id="R-MMU-9860927">
    <property type="pathway name" value="Turbulent (oscillatory, disturbed) flow shear stress activates signaling by PIEZO1 and integrins in endothelial cells"/>
</dbReference>
<dbReference type="BioGRID-ORCS" id="56489">
    <property type="hits" value="2 hits in 80 CRISPR screens"/>
</dbReference>
<dbReference type="PRO" id="PR:Q9R0T8"/>
<dbReference type="Proteomes" id="UP000000589">
    <property type="component" value="Chromosome 1"/>
</dbReference>
<dbReference type="RNAct" id="Q9R0T8">
    <property type="molecule type" value="protein"/>
</dbReference>
<dbReference type="Bgee" id="ENSMUSG00000042349">
    <property type="expression patterns" value="Expressed in peripheral lymph node and 139 other cell types or tissues"/>
</dbReference>
<dbReference type="ExpressionAtlas" id="Q9R0T8">
    <property type="expression patterns" value="baseline and differential"/>
</dbReference>
<dbReference type="GO" id="GO:0005737">
    <property type="term" value="C:cytoplasm"/>
    <property type="evidence" value="ECO:0000250"/>
    <property type="project" value="UniProtKB"/>
</dbReference>
<dbReference type="GO" id="GO:0031966">
    <property type="term" value="C:mitochondrial membrane"/>
    <property type="evidence" value="ECO:0007669"/>
    <property type="project" value="Ensembl"/>
</dbReference>
<dbReference type="GO" id="GO:0005634">
    <property type="term" value="C:nucleus"/>
    <property type="evidence" value="ECO:0000250"/>
    <property type="project" value="UniProtKB"/>
</dbReference>
<dbReference type="GO" id="GO:0016605">
    <property type="term" value="C:PML body"/>
    <property type="evidence" value="ECO:0000250"/>
    <property type="project" value="UniProtKB"/>
</dbReference>
<dbReference type="GO" id="GO:0005524">
    <property type="term" value="F:ATP binding"/>
    <property type="evidence" value="ECO:0007669"/>
    <property type="project" value="UniProtKB-KW"/>
</dbReference>
<dbReference type="GO" id="GO:0042802">
    <property type="term" value="F:identical protein binding"/>
    <property type="evidence" value="ECO:0007669"/>
    <property type="project" value="Ensembl"/>
</dbReference>
<dbReference type="GO" id="GO:0008384">
    <property type="term" value="F:IkappaB kinase activity"/>
    <property type="evidence" value="ECO:0000314"/>
    <property type="project" value="MGI"/>
</dbReference>
<dbReference type="GO" id="GO:0036435">
    <property type="term" value="F:K48-linked polyubiquitin modification-dependent protein binding"/>
    <property type="evidence" value="ECO:0000314"/>
    <property type="project" value="UniProtKB"/>
</dbReference>
<dbReference type="GO" id="GO:0004672">
    <property type="term" value="F:protein kinase activity"/>
    <property type="evidence" value="ECO:0000314"/>
    <property type="project" value="MGI"/>
</dbReference>
<dbReference type="GO" id="GO:0031625">
    <property type="term" value="F:ubiquitin protein ligase binding"/>
    <property type="evidence" value="ECO:0000353"/>
    <property type="project" value="UniProtKB"/>
</dbReference>
<dbReference type="GO" id="GO:0098586">
    <property type="term" value="P:cellular response to virus"/>
    <property type="evidence" value="ECO:0000314"/>
    <property type="project" value="UniProtKB"/>
</dbReference>
<dbReference type="GO" id="GO:0010467">
    <property type="term" value="P:gene expression"/>
    <property type="evidence" value="ECO:0000315"/>
    <property type="project" value="MGI"/>
</dbReference>
<dbReference type="GO" id="GO:0006955">
    <property type="term" value="P:immune response"/>
    <property type="evidence" value="ECO:0000315"/>
    <property type="project" value="MGI"/>
</dbReference>
<dbReference type="GO" id="GO:0097400">
    <property type="term" value="P:interleukin-17-mediated signaling pathway"/>
    <property type="evidence" value="ECO:0000314"/>
    <property type="project" value="MGI"/>
</dbReference>
<dbReference type="GO" id="GO:0008630">
    <property type="term" value="P:intrinsic apoptotic signaling pathway in response to DNA damage"/>
    <property type="evidence" value="ECO:0000250"/>
    <property type="project" value="UniProtKB"/>
</dbReference>
<dbReference type="GO" id="GO:0048255">
    <property type="term" value="P:mRNA stabilization"/>
    <property type="evidence" value="ECO:0000315"/>
    <property type="project" value="MGI"/>
</dbReference>
<dbReference type="GO" id="GO:0043123">
    <property type="term" value="P:positive regulation of canonical NF-kappaB signal transduction"/>
    <property type="evidence" value="ECO:0000250"/>
    <property type="project" value="UniProtKB"/>
</dbReference>
<dbReference type="GO" id="GO:0010884">
    <property type="term" value="P:positive regulation of lipid storage"/>
    <property type="evidence" value="ECO:0000315"/>
    <property type="project" value="BHF-UCL"/>
</dbReference>
<dbReference type="GO" id="GO:0032481">
    <property type="term" value="P:positive regulation of type I interferon production"/>
    <property type="evidence" value="ECO:0007669"/>
    <property type="project" value="Ensembl"/>
</dbReference>
<dbReference type="GO" id="GO:0060340">
    <property type="term" value="P:positive regulation of type I interferon-mediated signaling pathway"/>
    <property type="evidence" value="ECO:0000315"/>
    <property type="project" value="UniProtKB"/>
</dbReference>
<dbReference type="GO" id="GO:0043254">
    <property type="term" value="P:regulation of protein-containing complex assembly"/>
    <property type="evidence" value="ECO:0000315"/>
    <property type="project" value="MGI"/>
</dbReference>
<dbReference type="GO" id="GO:0035456">
    <property type="term" value="P:response to interferon-beta"/>
    <property type="evidence" value="ECO:0007669"/>
    <property type="project" value="Ensembl"/>
</dbReference>
<dbReference type="GO" id="GO:0034340">
    <property type="term" value="P:response to type I interferon"/>
    <property type="evidence" value="ECO:0000314"/>
    <property type="project" value="UniProtKB"/>
</dbReference>
<dbReference type="CDD" id="cd17128">
    <property type="entry name" value="Ubl_IKKE"/>
    <property type="match status" value="1"/>
</dbReference>
<dbReference type="FunFam" id="1.20.1270.420:FF:000002">
    <property type="entry name" value="Inhibitor of nuclear factor kappa B kinase subunit epsilon"/>
    <property type="match status" value="1"/>
</dbReference>
<dbReference type="FunFam" id="3.10.20.90:FF:000147">
    <property type="entry name" value="Inhibitor of nuclear factor kappa B kinase subunit epsilon"/>
    <property type="match status" value="1"/>
</dbReference>
<dbReference type="FunFam" id="1.10.510.10:FF:000100">
    <property type="entry name" value="inhibitor of nuclear factor kappa-B kinase subunit epsilon"/>
    <property type="match status" value="1"/>
</dbReference>
<dbReference type="FunFam" id="3.30.200.20:FF:000106">
    <property type="entry name" value="serine/threonine-protein kinase TBK1 isoform X1"/>
    <property type="match status" value="1"/>
</dbReference>
<dbReference type="Gene3D" id="1.20.1270.420">
    <property type="match status" value="1"/>
</dbReference>
<dbReference type="Gene3D" id="3.10.20.90">
    <property type="entry name" value="Phosphatidylinositol 3-kinase Catalytic Subunit, Chain A, domain 1"/>
    <property type="match status" value="1"/>
</dbReference>
<dbReference type="Gene3D" id="3.30.200.20">
    <property type="entry name" value="Phosphorylase Kinase, domain 1"/>
    <property type="match status" value="1"/>
</dbReference>
<dbReference type="Gene3D" id="1.10.510.10">
    <property type="entry name" value="Transferase(Phosphotransferase) domain 1"/>
    <property type="match status" value="1"/>
</dbReference>
<dbReference type="InterPro" id="IPR051180">
    <property type="entry name" value="IKK"/>
</dbReference>
<dbReference type="InterPro" id="IPR011009">
    <property type="entry name" value="Kinase-like_dom_sf"/>
</dbReference>
<dbReference type="InterPro" id="IPR000719">
    <property type="entry name" value="Prot_kinase_dom"/>
</dbReference>
<dbReference type="InterPro" id="IPR017441">
    <property type="entry name" value="Protein_kinase_ATP_BS"/>
</dbReference>
<dbReference type="InterPro" id="IPR041309">
    <property type="entry name" value="TBK1_CCD1"/>
</dbReference>
<dbReference type="InterPro" id="IPR041087">
    <property type="entry name" value="TBK1_ULD"/>
</dbReference>
<dbReference type="PANTHER" id="PTHR22969">
    <property type="entry name" value="IKB KINASE"/>
    <property type="match status" value="1"/>
</dbReference>
<dbReference type="PANTHER" id="PTHR22969:SF10">
    <property type="entry name" value="INHIBITOR OF NUCLEAR FACTOR KAPPA-B KINASE SUBUNIT EPSILON"/>
    <property type="match status" value="1"/>
</dbReference>
<dbReference type="Pfam" id="PF00069">
    <property type="entry name" value="Pkinase"/>
    <property type="match status" value="1"/>
</dbReference>
<dbReference type="Pfam" id="PF18394">
    <property type="entry name" value="TBK1_CCD1"/>
    <property type="match status" value="1"/>
</dbReference>
<dbReference type="Pfam" id="PF18396">
    <property type="entry name" value="TBK1_ULD"/>
    <property type="match status" value="1"/>
</dbReference>
<dbReference type="SMART" id="SM00220">
    <property type="entry name" value="S_TKc"/>
    <property type="match status" value="1"/>
</dbReference>
<dbReference type="SUPFAM" id="SSF56112">
    <property type="entry name" value="Protein kinase-like (PK-like)"/>
    <property type="match status" value="1"/>
</dbReference>
<dbReference type="PROSITE" id="PS00107">
    <property type="entry name" value="PROTEIN_KINASE_ATP"/>
    <property type="match status" value="1"/>
</dbReference>
<dbReference type="PROSITE" id="PS50011">
    <property type="entry name" value="PROTEIN_KINASE_DOM"/>
    <property type="match status" value="1"/>
</dbReference>
<protein>
    <recommendedName>
        <fullName>Inhibitor of nuclear factor kappa-B kinase subunit epsilon</fullName>
        <shortName>I-kappa-B kinase epsilon</shortName>
        <shortName>IKK-E</shortName>
        <shortName>IKK-epsilon</shortName>
        <shortName>IkBKE</shortName>
        <ecNumber evidence="4">2.7.11.10</ecNumber>
    </recommendedName>
    <alternativeName>
        <fullName>Inducible I kappa-B kinase</fullName>
        <shortName>IKK-i</shortName>
    </alternativeName>
</protein>
<organism>
    <name type="scientific">Mus musculus</name>
    <name type="common">Mouse</name>
    <dbReference type="NCBI Taxonomy" id="10090"/>
    <lineage>
        <taxon>Eukaryota</taxon>
        <taxon>Metazoa</taxon>
        <taxon>Chordata</taxon>
        <taxon>Craniata</taxon>
        <taxon>Vertebrata</taxon>
        <taxon>Euteleostomi</taxon>
        <taxon>Mammalia</taxon>
        <taxon>Eutheria</taxon>
        <taxon>Euarchontoglires</taxon>
        <taxon>Glires</taxon>
        <taxon>Rodentia</taxon>
        <taxon>Myomorpha</taxon>
        <taxon>Muroidea</taxon>
        <taxon>Muridae</taxon>
        <taxon>Murinae</taxon>
        <taxon>Mus</taxon>
        <taxon>Mus</taxon>
    </lineage>
</organism>
<gene>
    <name type="primary">Ikbke</name>
    <name type="synonym">Ikke</name>
    <name type="synonym">Ikki</name>
</gene>
<feature type="chain" id="PRO_0000086018" description="Inhibitor of nuclear factor kappa-B kinase subunit epsilon">
    <location>
        <begin position="1"/>
        <end position="717"/>
    </location>
</feature>
<feature type="domain" description="Protein kinase" evidence="3">
    <location>
        <begin position="9"/>
        <end position="315"/>
    </location>
</feature>
<feature type="region of interest" description="Interaction with DDX3X" evidence="1">
    <location>
        <begin position="385"/>
        <end position="650"/>
    </location>
</feature>
<feature type="region of interest" description="Leucine-zipper">
    <location>
        <begin position="452"/>
        <end position="473"/>
    </location>
</feature>
<feature type="active site" description="Proton acceptor" evidence="3">
    <location>
        <position position="135"/>
    </location>
</feature>
<feature type="binding site" evidence="3">
    <location>
        <begin position="15"/>
        <end position="23"/>
    </location>
    <ligand>
        <name>ATP</name>
        <dbReference type="ChEBI" id="CHEBI:30616"/>
    </ligand>
</feature>
<feature type="binding site" evidence="3">
    <location>
        <position position="38"/>
    </location>
    <ligand>
        <name>ATP</name>
        <dbReference type="ChEBI" id="CHEBI:30616"/>
    </ligand>
</feature>
<feature type="modified residue" description="Phosphoserine; by autocatalysis and IKKB" evidence="2">
    <location>
        <position position="172"/>
    </location>
</feature>
<feature type="modified residue" description="Phosphothreonine" evidence="6">
    <location>
        <position position="503"/>
    </location>
</feature>
<feature type="modified residue" description="Phosphoserine" evidence="2">
    <location>
        <position position="665"/>
    </location>
</feature>
<feature type="cross-link" description="Glycyl lysine isopeptide (Lys-Gly) (interchain with G-Cter in ubiquitin)" evidence="2">
    <location>
        <position position="30"/>
    </location>
</feature>
<feature type="cross-link" description="Glycyl lysine isopeptide (Lys-Gly) (interchain with G-Cter in SUMO1)" evidence="2">
    <location>
        <position position="231"/>
    </location>
</feature>
<feature type="cross-link" description="Glycyl lysine isopeptide (Lys-Gly) (interchain with G-Cter in ubiquitin)" evidence="2">
    <location>
        <position position="403"/>
    </location>
</feature>
<feature type="mutagenesis site" description="Dominant negative." evidence="6">
    <original>K</original>
    <variation>A</variation>
    <location>
        <position position="38"/>
    </location>
</feature>
<feature type="sequence conflict" description="In Ref. 1; BAA85154." evidence="12" ref="1">
    <original>S</original>
    <variation>G</variation>
    <location>
        <position position="471"/>
    </location>
</feature>
<feature type="sequence conflict" description="In Ref. 1; BAA85154." evidence="12" ref="1">
    <original>A</original>
    <variation>S</variation>
    <location>
        <position position="483"/>
    </location>
</feature>
<name>IKKE_MOUSE</name>
<keyword id="KW-0067">ATP-binding</keyword>
<keyword id="KW-0963">Cytoplasm</keyword>
<keyword id="KW-0227">DNA damage</keyword>
<keyword id="KW-1017">Isopeptide bond</keyword>
<keyword id="KW-0418">Kinase</keyword>
<keyword id="KW-0547">Nucleotide-binding</keyword>
<keyword id="KW-0539">Nucleus</keyword>
<keyword id="KW-0597">Phosphoprotein</keyword>
<keyword id="KW-1185">Reference proteome</keyword>
<keyword id="KW-0723">Serine/threonine-protein kinase</keyword>
<keyword id="KW-0808">Transferase</keyword>
<keyword id="KW-0832">Ubl conjugation</keyword>
<evidence type="ECO:0000250" key="1"/>
<evidence type="ECO:0000250" key="2">
    <source>
        <dbReference type="UniProtKB" id="Q14164"/>
    </source>
</evidence>
<evidence type="ECO:0000255" key="3">
    <source>
        <dbReference type="PROSITE-ProRule" id="PRU00159"/>
    </source>
</evidence>
<evidence type="ECO:0000269" key="4">
    <source>
    </source>
</evidence>
<evidence type="ECO:0000269" key="5">
    <source>
    </source>
</evidence>
<evidence type="ECO:0000269" key="6">
    <source>
    </source>
</evidence>
<evidence type="ECO:0000269" key="7">
    <source>
    </source>
</evidence>
<evidence type="ECO:0000269" key="8">
    <source>
    </source>
</evidence>
<evidence type="ECO:0000269" key="9">
    <source>
    </source>
</evidence>
<evidence type="ECO:0000269" key="10">
    <source>
    </source>
</evidence>
<evidence type="ECO:0000269" key="11">
    <source>
    </source>
</evidence>
<evidence type="ECO:0000305" key="12"/>
<evidence type="ECO:0000305" key="13">
    <source>
    </source>
</evidence>
<accession>Q9R0T8</accession>
<accession>Q8C2I3</accession>
<sequence length="717" mass="80953">MQSTTNYLWHTDDLLGQGATASVYKARNKKSGEVVAVKVFNSASYRRPPEVQVREFEVLRRLNHQNIVKLFAVEETGGSRQKVLIMEYCSSGSLLSVLEDPENTFGLSEEEFLVVLRCVVAGMNHLRENGIVHRDIKPGNIMRLVGEEGQSIYKLSDFGAARKLDDDEKFVSVYGTEEYLHPDMYERAVLRKPQQKAFGVTVDLWSIGVTLYHAATGSLPFIPFGGPRRNKEIMYRITTEKPAGAISGTQKQENGPLEWSYSLPITCRLSMGLQNQLVPILANILEVEEDKCWGFDQFFAETSDILQRTVIHVFSLPQAVLHHVYIHAHNTIAIFLEAVYEQTNVTPKHQEYLFEGHPCVLEPSLSAQHIAHTAASSPLTLFSMSSDTPKGLAFRDPALDVPKFVPKVDLQADYSTAKGVLGAGYQALWLARVLLDGQALMLRGLHWVLEVLQDTCQQTLEVTRTALLYLSSSLGTERFSSGAGMPDVQERKEATELRTRLQTLSEILSKCSHNVTETQRSLSCLGEELLKNRDQIHEDNKSIQKIQCCLDKMHFIYKQFKKSRMRPGLSYNEEQIHKLDKVNFSHLAKRLLQVFQEECVQTYQVSLVTHGKRMRQVQRAQNHLHLIGHSVATCNSEARGAQESLNKIFDQLLLDRASEQGAEVSPQPMAPHPGPDPKDLVFHMQELCNDMKLLAFDLQDNNRLIERLHRVPSAPDV</sequence>